<protein>
    <recommendedName>
        <fullName>Single-stranded DNA-binding protein 3</fullName>
    </recommendedName>
    <alternativeName>
        <fullName>Sequence-specific single-stranded-DNA-binding protein</fullName>
    </alternativeName>
</protein>
<dbReference type="EMBL" id="U68380">
    <property type="protein sequence ID" value="AAC60373.2"/>
    <property type="molecule type" value="mRNA"/>
</dbReference>
<dbReference type="RefSeq" id="NP_989895.1">
    <property type="nucleotide sequence ID" value="NM_204564.2"/>
</dbReference>
<dbReference type="SMR" id="Q98948"/>
<dbReference type="FunCoup" id="Q98948">
    <property type="interactions" value="1350"/>
</dbReference>
<dbReference type="STRING" id="9031.ENSGALP00000057581"/>
<dbReference type="PaxDb" id="9031-ENSGALP00000017502"/>
<dbReference type="Ensembl" id="ENSGALT00010062062.1">
    <property type="protein sequence ID" value="ENSGALP00010038343.1"/>
    <property type="gene ID" value="ENSGALG00010025422.1"/>
</dbReference>
<dbReference type="GeneID" id="395250"/>
<dbReference type="KEGG" id="gga:395250"/>
<dbReference type="CTD" id="23648"/>
<dbReference type="VEuPathDB" id="HostDB:geneid_395250"/>
<dbReference type="eggNOG" id="KOG4594">
    <property type="taxonomic scope" value="Eukaryota"/>
</dbReference>
<dbReference type="GeneTree" id="ENSGT00950000183049"/>
<dbReference type="InParanoid" id="Q98948"/>
<dbReference type="OrthoDB" id="5600002at2759"/>
<dbReference type="PhylomeDB" id="Q98948"/>
<dbReference type="PRO" id="PR:Q98948"/>
<dbReference type="Proteomes" id="UP000000539">
    <property type="component" value="Chromosome 8"/>
</dbReference>
<dbReference type="Bgee" id="ENSGALG00000010774">
    <property type="expression patterns" value="Expressed in granulocyte and 12 other cell types or tissues"/>
</dbReference>
<dbReference type="GO" id="GO:0005634">
    <property type="term" value="C:nucleus"/>
    <property type="evidence" value="ECO:0000318"/>
    <property type="project" value="GO_Central"/>
</dbReference>
<dbReference type="GO" id="GO:0003697">
    <property type="term" value="F:single-stranded DNA binding"/>
    <property type="evidence" value="ECO:0007669"/>
    <property type="project" value="InterPro"/>
</dbReference>
<dbReference type="GO" id="GO:0045944">
    <property type="term" value="P:positive regulation of transcription by RNA polymerase II"/>
    <property type="evidence" value="ECO:0000318"/>
    <property type="project" value="GO_Central"/>
</dbReference>
<dbReference type="InterPro" id="IPR006594">
    <property type="entry name" value="LisH"/>
</dbReference>
<dbReference type="InterPro" id="IPR008116">
    <property type="entry name" value="SSDP_DNA-bd"/>
</dbReference>
<dbReference type="PANTHER" id="PTHR12610">
    <property type="entry name" value="SINGLE STRANDED DNA BINDING PROTEIN"/>
    <property type="match status" value="1"/>
</dbReference>
<dbReference type="PANTHER" id="PTHR12610:SF22">
    <property type="entry name" value="SINGLE-STRANDED DNA-BINDING PROTEIN 3"/>
    <property type="match status" value="1"/>
</dbReference>
<dbReference type="Pfam" id="PF04503">
    <property type="entry name" value="SSDP"/>
    <property type="match status" value="2"/>
</dbReference>
<dbReference type="PRINTS" id="PR01743">
    <property type="entry name" value="SSDNABINDING"/>
</dbReference>
<dbReference type="SMART" id="SM00667">
    <property type="entry name" value="LisH"/>
    <property type="match status" value="1"/>
</dbReference>
<dbReference type="PROSITE" id="PS50896">
    <property type="entry name" value="LISH"/>
    <property type="match status" value="1"/>
</dbReference>
<keyword id="KW-0238">DNA-binding</keyword>
<keyword id="KW-0539">Nucleus</keyword>
<keyword id="KW-1185">Reference proteome</keyword>
<keyword id="KW-0804">Transcription</keyword>
<keyword id="KW-0805">Transcription regulation</keyword>
<organism>
    <name type="scientific">Gallus gallus</name>
    <name type="common">Chicken</name>
    <dbReference type="NCBI Taxonomy" id="9031"/>
    <lineage>
        <taxon>Eukaryota</taxon>
        <taxon>Metazoa</taxon>
        <taxon>Chordata</taxon>
        <taxon>Craniata</taxon>
        <taxon>Vertebrata</taxon>
        <taxon>Euteleostomi</taxon>
        <taxon>Archelosauria</taxon>
        <taxon>Archosauria</taxon>
        <taxon>Dinosauria</taxon>
        <taxon>Saurischia</taxon>
        <taxon>Theropoda</taxon>
        <taxon>Coelurosauria</taxon>
        <taxon>Aves</taxon>
        <taxon>Neognathae</taxon>
        <taxon>Galloanserae</taxon>
        <taxon>Galliformes</taxon>
        <taxon>Phasianidae</taxon>
        <taxon>Phasianinae</taxon>
        <taxon>Gallus</taxon>
    </lineage>
</organism>
<name>SSBP3_CHICK</name>
<reference key="1">
    <citation type="submission" date="2002-04" db="EMBL/GenBank/DDBJ databases">
        <authorList>
            <person name="Bayarsaihan D."/>
        </authorList>
    </citation>
    <scope>NUCLEOTIDE SEQUENCE [MRNA]</scope>
    <scope>SEQUENCE REVISION TO 123-148</scope>
</reference>
<reference key="2">
    <citation type="journal article" date="1998" name="Biochem. J.">
        <title>Cloning and characterization of a novel sequence-specific single-stranded-DNA-binding protein.</title>
        <authorList>
            <person name="Bayarsaihan D."/>
            <person name="Soto R.J."/>
            <person name="Lukens L.N."/>
        </authorList>
    </citation>
    <scope>NUCLEOTIDE SEQUENCE [MRNA] OF 78-368</scope>
    <source>
        <tissue>Embryonic fibroblast</tissue>
    </source>
</reference>
<comment type="function">
    <text>May be involved in transcription regulation of the alpha 2(I) collagen gene where it binds to the single-stranded polypyrimidine sequences in the promoter region.</text>
</comment>
<comment type="subcellular location">
    <subcellularLocation>
        <location>Nucleus</location>
    </subcellularLocation>
</comment>
<comment type="tissue specificity">
    <text>Expressed in embryonic fibroblasts and chondrocytes.</text>
</comment>
<evidence type="ECO:0000255" key="1">
    <source>
        <dbReference type="PROSITE-ProRule" id="PRU00126"/>
    </source>
</evidence>
<evidence type="ECO:0000256" key="2">
    <source>
        <dbReference type="SAM" id="MobiDB-lite"/>
    </source>
</evidence>
<proteinExistence type="evidence at transcript level"/>
<sequence>MFAKGKGSAVPSDGQAREKLALYVYEYLLHVGAQKSAQTFLSEIRWEKNITLGEPPGFLHSWWCVFWDLYCAAPERRDTCEHSSEAKAFHDYSAAAAPSPVLGNIPPNDGMPGGPIPPGFFQGPPGSQPSPHAQPPPHNPNSMMGPHSQPPGAVPGTQPLLPNSMDPTRQQGHPNMGGPMQRMNPPRGMGPMGPGPQNYGSGMRPPPNSLGPGMPGINMGPGAGRPWPNPSSANSIPYSSSSPGTYVGPPGGGGPPGTPIMPSPADSTNSSDNIYTMINPVPPAGSRSNFPMGPGSDGPMGGMGGMEPHHMNGSLGSGDIDGLPKNSPNNISGISNPPGTPRDDGELGGNFLHSFQNDNYSPSMTMSV</sequence>
<feature type="chain" id="PRO_0000123831" description="Single-stranded DNA-binding protein 3">
    <location>
        <begin position="1"/>
        <end position="368"/>
    </location>
</feature>
<feature type="domain" description="LisH" evidence="1">
    <location>
        <begin position="16"/>
        <end position="48"/>
    </location>
</feature>
<feature type="region of interest" description="Disordered" evidence="2">
    <location>
        <begin position="100"/>
        <end position="368"/>
    </location>
</feature>
<feature type="compositionally biased region" description="Pro residues" evidence="2">
    <location>
        <begin position="126"/>
        <end position="139"/>
    </location>
</feature>
<feature type="compositionally biased region" description="Low complexity" evidence="2">
    <location>
        <begin position="174"/>
        <end position="189"/>
    </location>
</feature>
<feature type="compositionally biased region" description="Low complexity" evidence="2">
    <location>
        <begin position="211"/>
        <end position="220"/>
    </location>
</feature>
<feature type="compositionally biased region" description="Low complexity" evidence="2">
    <location>
        <begin position="230"/>
        <end position="248"/>
    </location>
</feature>
<feature type="compositionally biased region" description="Pro residues" evidence="2">
    <location>
        <begin position="252"/>
        <end position="262"/>
    </location>
</feature>
<feature type="compositionally biased region" description="Polar residues" evidence="2">
    <location>
        <begin position="265"/>
        <end position="276"/>
    </location>
</feature>
<feature type="compositionally biased region" description="Gly residues" evidence="2">
    <location>
        <begin position="295"/>
        <end position="305"/>
    </location>
</feature>
<feature type="compositionally biased region" description="Low complexity" evidence="2">
    <location>
        <begin position="326"/>
        <end position="337"/>
    </location>
</feature>
<feature type="compositionally biased region" description="Polar residues" evidence="2">
    <location>
        <begin position="353"/>
        <end position="368"/>
    </location>
</feature>
<accession>Q98948</accession>
<gene>
    <name type="primary">SSBP3</name>
    <name type="synonym">SSDP</name>
</gene>